<feature type="chain" id="PRO_0000332631" description="Ribonuclease H">
    <location>
        <begin position="1"/>
        <end position="151"/>
    </location>
</feature>
<feature type="domain" description="RNase H type-1" evidence="2">
    <location>
        <begin position="1"/>
        <end position="143"/>
    </location>
</feature>
<feature type="binding site" evidence="1">
    <location>
        <position position="9"/>
    </location>
    <ligand>
        <name>Mg(2+)</name>
        <dbReference type="ChEBI" id="CHEBI:18420"/>
        <label>1</label>
    </ligand>
</feature>
<feature type="binding site" evidence="1">
    <location>
        <position position="9"/>
    </location>
    <ligand>
        <name>Mg(2+)</name>
        <dbReference type="ChEBI" id="CHEBI:18420"/>
        <label>2</label>
    </ligand>
</feature>
<feature type="binding site" evidence="1">
    <location>
        <position position="48"/>
    </location>
    <ligand>
        <name>Mg(2+)</name>
        <dbReference type="ChEBI" id="CHEBI:18420"/>
        <label>1</label>
    </ligand>
</feature>
<feature type="binding site" evidence="1">
    <location>
        <position position="71"/>
    </location>
    <ligand>
        <name>Mg(2+)</name>
        <dbReference type="ChEBI" id="CHEBI:18420"/>
        <label>1</label>
    </ligand>
</feature>
<feature type="binding site" evidence="1">
    <location>
        <position position="135"/>
    </location>
    <ligand>
        <name>Mg(2+)</name>
        <dbReference type="ChEBI" id="CHEBI:18420"/>
        <label>2</label>
    </ligand>
</feature>
<accession>Q2GDA1</accession>
<gene>
    <name evidence="1" type="primary">rnhA</name>
    <name type="ordered locus">NSE_0667</name>
</gene>
<name>RNH_NEOSM</name>
<comment type="function">
    <text evidence="1">Endonuclease that specifically degrades the RNA of RNA-DNA hybrids.</text>
</comment>
<comment type="catalytic activity">
    <reaction evidence="1">
        <text>Endonucleolytic cleavage to 5'-phosphomonoester.</text>
        <dbReference type="EC" id="3.1.26.4"/>
    </reaction>
</comment>
<comment type="cofactor">
    <cofactor evidence="1">
        <name>Mg(2+)</name>
        <dbReference type="ChEBI" id="CHEBI:18420"/>
    </cofactor>
    <text evidence="1">Binds 1 Mg(2+) ion per subunit. May bind a second metal ion at a regulatory site, or after substrate binding.</text>
</comment>
<comment type="subunit">
    <text evidence="1">Monomer.</text>
</comment>
<comment type="subcellular location">
    <subcellularLocation>
        <location evidence="1">Cytoplasm</location>
    </subcellularLocation>
</comment>
<comment type="similarity">
    <text evidence="1">Belongs to the RNase H family.</text>
</comment>
<protein>
    <recommendedName>
        <fullName evidence="1">Ribonuclease H</fullName>
        <shortName evidence="1">RNase H</shortName>
        <ecNumber evidence="1">3.1.26.4</ecNumber>
    </recommendedName>
</protein>
<dbReference type="EC" id="3.1.26.4" evidence="1"/>
<dbReference type="EMBL" id="CP000237">
    <property type="protein sequence ID" value="ABD45876.1"/>
    <property type="molecule type" value="Genomic_DNA"/>
</dbReference>
<dbReference type="RefSeq" id="WP_011452051.1">
    <property type="nucleotide sequence ID" value="NC_007798.1"/>
</dbReference>
<dbReference type="SMR" id="Q2GDA1"/>
<dbReference type="STRING" id="222891.NSE_0667"/>
<dbReference type="KEGG" id="nse:NSE_0667"/>
<dbReference type="eggNOG" id="COG0328">
    <property type="taxonomic scope" value="Bacteria"/>
</dbReference>
<dbReference type="HOGENOM" id="CLU_030894_6_0_5"/>
<dbReference type="OrthoDB" id="7845843at2"/>
<dbReference type="Proteomes" id="UP000001942">
    <property type="component" value="Chromosome"/>
</dbReference>
<dbReference type="GO" id="GO:0005737">
    <property type="term" value="C:cytoplasm"/>
    <property type="evidence" value="ECO:0007669"/>
    <property type="project" value="UniProtKB-SubCell"/>
</dbReference>
<dbReference type="GO" id="GO:0000287">
    <property type="term" value="F:magnesium ion binding"/>
    <property type="evidence" value="ECO:0007669"/>
    <property type="project" value="UniProtKB-UniRule"/>
</dbReference>
<dbReference type="GO" id="GO:0003676">
    <property type="term" value="F:nucleic acid binding"/>
    <property type="evidence" value="ECO:0007669"/>
    <property type="project" value="InterPro"/>
</dbReference>
<dbReference type="GO" id="GO:0004523">
    <property type="term" value="F:RNA-DNA hybrid ribonuclease activity"/>
    <property type="evidence" value="ECO:0007669"/>
    <property type="project" value="UniProtKB-UniRule"/>
</dbReference>
<dbReference type="GO" id="GO:0043137">
    <property type="term" value="P:DNA replication, removal of RNA primer"/>
    <property type="evidence" value="ECO:0007669"/>
    <property type="project" value="TreeGrafter"/>
</dbReference>
<dbReference type="CDD" id="cd09278">
    <property type="entry name" value="RNase_HI_prokaryote_like"/>
    <property type="match status" value="1"/>
</dbReference>
<dbReference type="Gene3D" id="3.30.420.10">
    <property type="entry name" value="Ribonuclease H-like superfamily/Ribonuclease H"/>
    <property type="match status" value="1"/>
</dbReference>
<dbReference type="HAMAP" id="MF_00042">
    <property type="entry name" value="RNase_H"/>
    <property type="match status" value="1"/>
</dbReference>
<dbReference type="InterPro" id="IPR050092">
    <property type="entry name" value="RNase_H"/>
</dbReference>
<dbReference type="InterPro" id="IPR012337">
    <property type="entry name" value="RNaseH-like_sf"/>
</dbReference>
<dbReference type="InterPro" id="IPR002156">
    <property type="entry name" value="RNaseH_domain"/>
</dbReference>
<dbReference type="InterPro" id="IPR036397">
    <property type="entry name" value="RNaseH_sf"/>
</dbReference>
<dbReference type="InterPro" id="IPR022892">
    <property type="entry name" value="RNaseHI"/>
</dbReference>
<dbReference type="NCBIfam" id="NF001236">
    <property type="entry name" value="PRK00203.1"/>
    <property type="match status" value="1"/>
</dbReference>
<dbReference type="PANTHER" id="PTHR10642">
    <property type="entry name" value="RIBONUCLEASE H1"/>
    <property type="match status" value="1"/>
</dbReference>
<dbReference type="PANTHER" id="PTHR10642:SF26">
    <property type="entry name" value="RIBONUCLEASE H1"/>
    <property type="match status" value="1"/>
</dbReference>
<dbReference type="Pfam" id="PF00075">
    <property type="entry name" value="RNase_H"/>
    <property type="match status" value="1"/>
</dbReference>
<dbReference type="SUPFAM" id="SSF53098">
    <property type="entry name" value="Ribonuclease H-like"/>
    <property type="match status" value="1"/>
</dbReference>
<dbReference type="PROSITE" id="PS50879">
    <property type="entry name" value="RNASE_H_1"/>
    <property type="match status" value="1"/>
</dbReference>
<sequence>MEEYVIYTDGACLGNPGPGGWAAVIIQRGTNEKIISGREADSTNNKMELLAVIKALESFEQKGKRVTVYTDSTYVYKGITAWIESWMKNKWRNSSGGAVKNKEMWVRLHGIAAAHTVRWLWVKAHNGDHYNEIVDRVARKEAASFTNCEPE</sequence>
<evidence type="ECO:0000255" key="1">
    <source>
        <dbReference type="HAMAP-Rule" id="MF_00042"/>
    </source>
</evidence>
<evidence type="ECO:0000255" key="2">
    <source>
        <dbReference type="PROSITE-ProRule" id="PRU00408"/>
    </source>
</evidence>
<organism>
    <name type="scientific">Neorickettsia sennetsu (strain ATCC VR-367 / Miyayama)</name>
    <name type="common">Ehrlichia sennetsu</name>
    <dbReference type="NCBI Taxonomy" id="222891"/>
    <lineage>
        <taxon>Bacteria</taxon>
        <taxon>Pseudomonadati</taxon>
        <taxon>Pseudomonadota</taxon>
        <taxon>Alphaproteobacteria</taxon>
        <taxon>Rickettsiales</taxon>
        <taxon>Anaplasmataceae</taxon>
        <taxon>Neorickettsia</taxon>
    </lineage>
</organism>
<reference key="1">
    <citation type="journal article" date="2006" name="PLoS Genet.">
        <title>Comparative genomics of emerging human ehrlichiosis agents.</title>
        <authorList>
            <person name="Dunning Hotopp J.C."/>
            <person name="Lin M."/>
            <person name="Madupu R."/>
            <person name="Crabtree J."/>
            <person name="Angiuoli S.V."/>
            <person name="Eisen J.A."/>
            <person name="Seshadri R."/>
            <person name="Ren Q."/>
            <person name="Wu M."/>
            <person name="Utterback T.R."/>
            <person name="Smith S."/>
            <person name="Lewis M."/>
            <person name="Khouri H."/>
            <person name="Zhang C."/>
            <person name="Niu H."/>
            <person name="Lin Q."/>
            <person name="Ohashi N."/>
            <person name="Zhi N."/>
            <person name="Nelson W.C."/>
            <person name="Brinkac L.M."/>
            <person name="Dodson R.J."/>
            <person name="Rosovitz M.J."/>
            <person name="Sundaram J.P."/>
            <person name="Daugherty S.C."/>
            <person name="Davidsen T."/>
            <person name="Durkin A.S."/>
            <person name="Gwinn M.L."/>
            <person name="Haft D.H."/>
            <person name="Selengut J.D."/>
            <person name="Sullivan S.A."/>
            <person name="Zafar N."/>
            <person name="Zhou L."/>
            <person name="Benahmed F."/>
            <person name="Forberger H."/>
            <person name="Halpin R."/>
            <person name="Mulligan S."/>
            <person name="Robinson J."/>
            <person name="White O."/>
            <person name="Rikihisa Y."/>
            <person name="Tettelin H."/>
        </authorList>
    </citation>
    <scope>NUCLEOTIDE SEQUENCE [LARGE SCALE GENOMIC DNA]</scope>
    <source>
        <strain>ATCC VR-367 / Miyayama</strain>
    </source>
</reference>
<proteinExistence type="inferred from homology"/>
<keyword id="KW-0963">Cytoplasm</keyword>
<keyword id="KW-0255">Endonuclease</keyword>
<keyword id="KW-0378">Hydrolase</keyword>
<keyword id="KW-0460">Magnesium</keyword>
<keyword id="KW-0479">Metal-binding</keyword>
<keyword id="KW-0540">Nuclease</keyword>